<accession>P39212</accession>
<accession>Q2M631</accession>
<reference key="1">
    <citation type="journal article" date="1995" name="Nucleic Acids Res.">
        <title>Analysis of the Escherichia coli genome VI: DNA sequence of the region from 92.8 through 100 minutes.</title>
        <authorList>
            <person name="Burland V.D."/>
            <person name="Plunkett G. III"/>
            <person name="Sofia H.J."/>
            <person name="Daniels D.L."/>
            <person name="Blattner F.R."/>
        </authorList>
    </citation>
    <scope>NUCLEOTIDE SEQUENCE [LARGE SCALE GENOMIC DNA]</scope>
    <source>
        <strain>K12 / MG1655 / ATCC 47076</strain>
    </source>
</reference>
<reference key="2">
    <citation type="journal article" date="1997" name="Science">
        <title>The complete genome sequence of Escherichia coli K-12.</title>
        <authorList>
            <person name="Blattner F.R."/>
            <person name="Plunkett G. III"/>
            <person name="Bloch C.A."/>
            <person name="Perna N.T."/>
            <person name="Burland V."/>
            <person name="Riley M."/>
            <person name="Collado-Vides J."/>
            <person name="Glasner J.D."/>
            <person name="Rode C.K."/>
            <person name="Mayhew G.F."/>
            <person name="Gregor J."/>
            <person name="Davis N.W."/>
            <person name="Kirkpatrick H.A."/>
            <person name="Goeden M.A."/>
            <person name="Rose D.J."/>
            <person name="Mau B."/>
            <person name="Shao Y."/>
        </authorList>
    </citation>
    <scope>NUCLEOTIDE SEQUENCE [LARGE SCALE GENOMIC DNA]</scope>
    <source>
        <strain>K12 / MG1655 / ATCC 47076</strain>
    </source>
</reference>
<reference key="3">
    <citation type="journal article" date="2006" name="Mol. Syst. Biol.">
        <title>Highly accurate genome sequences of Escherichia coli K-12 strains MG1655 and W3110.</title>
        <authorList>
            <person name="Hayashi K."/>
            <person name="Morooka N."/>
            <person name="Yamamoto Y."/>
            <person name="Fujita K."/>
            <person name="Isono K."/>
            <person name="Choi S."/>
            <person name="Ohtsubo E."/>
            <person name="Baba T."/>
            <person name="Wanner B.L."/>
            <person name="Mori H."/>
            <person name="Horiuchi T."/>
        </authorList>
    </citation>
    <scope>NUCLEOTIDE SEQUENCE [LARGE SCALE GENOMIC DNA]</scope>
    <source>
        <strain>K12 / W3110 / ATCC 27325 / DSM 5911</strain>
    </source>
</reference>
<sequence>MKKRNFSAEFKRESAQLVVDQKYTVADAAKAMDVGLSTMTRWVKQLRDERQGKTPKASPITPEQIEIRKLRKKLQRIEMENEILKRLL</sequence>
<keyword id="KW-0233">DNA recombination</keyword>
<keyword id="KW-0238">DNA-binding</keyword>
<keyword id="KW-1185">Reference proteome</keyword>
<keyword id="KW-0814">Transposable element</keyword>
<keyword id="KW-0815">Transposition</keyword>
<protein>
    <recommendedName>
        <fullName>Putative transposase InsN for insertion sequence element IS911B</fullName>
    </recommendedName>
</protein>
<evidence type="ECO:0000305" key="1"/>
<proteinExistence type="uncertain"/>
<comment type="function">
    <text>Involved in the transposition of the insertion sequence IS911.</text>
</comment>
<comment type="similarity">
    <text evidence="1">Belongs to the transposase 8 family.</text>
</comment>
<comment type="caution">
    <text evidence="1">Could be the product of a pseudogene. Is missing C-terminal sequences compared to its orthologs.</text>
</comment>
<comment type="sequence caution" evidence="1">
    <conflict type="erroneous initiation">
        <sequence resource="EMBL-CDS" id="AAA97179"/>
    </conflict>
    <text>Extended N-terminus.</text>
</comment>
<feature type="chain" id="PRO_0000075422" description="Putative transposase InsN for insertion sequence element IS911B">
    <location>
        <begin position="1"/>
        <end position="88"/>
    </location>
</feature>
<gene>
    <name type="primary">insN2</name>
    <name type="ordered locus">b4283</name>
    <name type="ordered locus">JW5771</name>
</gene>
<name>INSN2_ECOLI</name>
<dbReference type="EMBL" id="U14003">
    <property type="protein sequence ID" value="AAA97179.1"/>
    <property type="status" value="ALT_INIT"/>
    <property type="molecule type" value="Genomic_DNA"/>
</dbReference>
<dbReference type="EMBL" id="U00096">
    <property type="status" value="NOT_ANNOTATED_CDS"/>
    <property type="molecule type" value="Genomic_DNA"/>
</dbReference>
<dbReference type="EMBL" id="AP009048">
    <property type="protein sequence ID" value="BAE78275.1"/>
    <property type="molecule type" value="Genomic_DNA"/>
</dbReference>
<dbReference type="PIR" id="S56508">
    <property type="entry name" value="S56508"/>
</dbReference>
<dbReference type="SMR" id="P39212"/>
<dbReference type="BioGRID" id="4261516">
    <property type="interactions" value="1"/>
</dbReference>
<dbReference type="FunCoup" id="P39212">
    <property type="interactions" value="73"/>
</dbReference>
<dbReference type="IntAct" id="P39212">
    <property type="interactions" value="1"/>
</dbReference>
<dbReference type="KEGG" id="ecj:JW5771"/>
<dbReference type="KEGG" id="ecoc:C3026_23095"/>
<dbReference type="PATRIC" id="fig|83333.103.peg.594"/>
<dbReference type="EchoBASE" id="EB4745"/>
<dbReference type="HOGENOM" id="CLU_027402_33_9_6"/>
<dbReference type="InParanoid" id="P39212"/>
<dbReference type="OMA" id="RQWRATL"/>
<dbReference type="PhylomeDB" id="P39212"/>
<dbReference type="PRO" id="PR:P39212"/>
<dbReference type="Proteomes" id="UP000000625">
    <property type="component" value="Chromosome"/>
</dbReference>
<dbReference type="GO" id="GO:0003677">
    <property type="term" value="F:DNA binding"/>
    <property type="evidence" value="ECO:0007669"/>
    <property type="project" value="UniProtKB-KW"/>
</dbReference>
<dbReference type="GO" id="GO:0004803">
    <property type="term" value="F:transposase activity"/>
    <property type="evidence" value="ECO:0007669"/>
    <property type="project" value="InterPro"/>
</dbReference>
<dbReference type="GO" id="GO:0006313">
    <property type="term" value="P:DNA transposition"/>
    <property type="evidence" value="ECO:0007669"/>
    <property type="project" value="InterPro"/>
</dbReference>
<dbReference type="Gene3D" id="1.10.10.60">
    <property type="entry name" value="Homeodomain-like"/>
    <property type="match status" value="1"/>
</dbReference>
<dbReference type="InterPro" id="IPR009057">
    <property type="entry name" value="Homeodomain-like_sf"/>
</dbReference>
<dbReference type="InterPro" id="IPR051839">
    <property type="entry name" value="RD_transcriptional_regulator"/>
</dbReference>
<dbReference type="InterPro" id="IPR002514">
    <property type="entry name" value="Transposase_8"/>
</dbReference>
<dbReference type="PANTHER" id="PTHR33215">
    <property type="entry name" value="PROTEIN DISTAL ANTENNA"/>
    <property type="match status" value="1"/>
</dbReference>
<dbReference type="PANTHER" id="PTHR33215:SF12">
    <property type="entry name" value="TRANSPOSASE INSN FOR INSERTION SEQUENCE ELEMENT IS911A-RELATED"/>
    <property type="match status" value="1"/>
</dbReference>
<dbReference type="Pfam" id="PF01527">
    <property type="entry name" value="HTH_Tnp_1"/>
    <property type="match status" value="1"/>
</dbReference>
<dbReference type="SUPFAM" id="SSF46689">
    <property type="entry name" value="Homeodomain-like"/>
    <property type="match status" value="1"/>
</dbReference>
<organism>
    <name type="scientific">Escherichia coli (strain K12)</name>
    <dbReference type="NCBI Taxonomy" id="83333"/>
    <lineage>
        <taxon>Bacteria</taxon>
        <taxon>Pseudomonadati</taxon>
        <taxon>Pseudomonadota</taxon>
        <taxon>Gammaproteobacteria</taxon>
        <taxon>Enterobacterales</taxon>
        <taxon>Enterobacteriaceae</taxon>
        <taxon>Escherichia</taxon>
    </lineage>
</organism>